<reference key="1">
    <citation type="journal article" date="2008" name="J. Bacteriol.">
        <title>Genome sequence of the streptomycin-producing microorganism Streptomyces griseus IFO 13350.</title>
        <authorList>
            <person name="Ohnishi Y."/>
            <person name="Ishikawa J."/>
            <person name="Hara H."/>
            <person name="Suzuki H."/>
            <person name="Ikenoya M."/>
            <person name="Ikeda H."/>
            <person name="Yamashita A."/>
            <person name="Hattori M."/>
            <person name="Horinouchi S."/>
        </authorList>
    </citation>
    <scope>NUCLEOTIDE SEQUENCE [LARGE SCALE GENOMIC DNA]</scope>
    <source>
        <strain>JCM 4626 / CBS 651.72 / NBRC 13350 / KCC S-0626 / ISP 5235</strain>
    </source>
</reference>
<dbReference type="EC" id="2.5.1.145" evidence="1"/>
<dbReference type="EMBL" id="AP009493">
    <property type="protein sequence ID" value="BAG22303.1"/>
    <property type="molecule type" value="Genomic_DNA"/>
</dbReference>
<dbReference type="SMR" id="B1W0P3"/>
<dbReference type="KEGG" id="sgr:SGR_5474"/>
<dbReference type="eggNOG" id="COG0682">
    <property type="taxonomic scope" value="Bacteria"/>
</dbReference>
<dbReference type="HOGENOM" id="CLU_013386_2_0_11"/>
<dbReference type="UniPathway" id="UPA00664"/>
<dbReference type="Proteomes" id="UP000001685">
    <property type="component" value="Chromosome"/>
</dbReference>
<dbReference type="GO" id="GO:0005886">
    <property type="term" value="C:plasma membrane"/>
    <property type="evidence" value="ECO:0007669"/>
    <property type="project" value="UniProtKB-SubCell"/>
</dbReference>
<dbReference type="GO" id="GO:0008961">
    <property type="term" value="F:phosphatidylglycerol-prolipoprotein diacylglyceryl transferase activity"/>
    <property type="evidence" value="ECO:0007669"/>
    <property type="project" value="UniProtKB-UniRule"/>
</dbReference>
<dbReference type="GO" id="GO:0042158">
    <property type="term" value="P:lipoprotein biosynthetic process"/>
    <property type="evidence" value="ECO:0007669"/>
    <property type="project" value="UniProtKB-UniRule"/>
</dbReference>
<dbReference type="HAMAP" id="MF_01147">
    <property type="entry name" value="Lgt"/>
    <property type="match status" value="1"/>
</dbReference>
<dbReference type="InterPro" id="IPR001640">
    <property type="entry name" value="Lgt"/>
</dbReference>
<dbReference type="NCBIfam" id="TIGR00544">
    <property type="entry name" value="lgt"/>
    <property type="match status" value="1"/>
</dbReference>
<dbReference type="PANTHER" id="PTHR30589:SF0">
    <property type="entry name" value="PHOSPHATIDYLGLYCEROL--PROLIPOPROTEIN DIACYLGLYCERYL TRANSFERASE"/>
    <property type="match status" value="1"/>
</dbReference>
<dbReference type="PANTHER" id="PTHR30589">
    <property type="entry name" value="PROLIPOPROTEIN DIACYLGLYCERYL TRANSFERASE"/>
    <property type="match status" value="1"/>
</dbReference>
<dbReference type="Pfam" id="PF01790">
    <property type="entry name" value="LGT"/>
    <property type="match status" value="1"/>
</dbReference>
<dbReference type="PROSITE" id="PS01311">
    <property type="entry name" value="LGT"/>
    <property type="match status" value="1"/>
</dbReference>
<evidence type="ECO:0000255" key="1">
    <source>
        <dbReference type="HAMAP-Rule" id="MF_01147"/>
    </source>
</evidence>
<evidence type="ECO:0000256" key="2">
    <source>
        <dbReference type="SAM" id="MobiDB-lite"/>
    </source>
</evidence>
<protein>
    <recommendedName>
        <fullName evidence="1">Phosphatidylglycerol--prolipoprotein diacylglyceryl transferase</fullName>
        <ecNumber evidence="1">2.5.1.145</ecNumber>
    </recommendedName>
</protein>
<sequence>MNLAFIPSPSTGVIELGPIPLRGYAFCIIIGVFVAVWFGNKRWVARGGKAGTVADVAVWAVPFGLVGGRLYHVITDYQLYFSDGEDWVDAFKIWEGGLGIWGAIAFGAVGAWIACRRRGIPLPAWADALAPGIAIAQAIGRWGNWFNQELYGKPTDLPWALEISEGPNRVAGTYHPTFLYESLWCIGVALLVIWADRRFKLGHGRAFALYVAGYCAGRGWIEYMRVDEAHHILGLRLNVWTAIVVFILAVVYIVISAKIRPGREEIVEPDRDATPAEKDGSGEDGSGEKGVAKADAAAKDPLTKDEPGKDATAENAGAAGAAEKA</sequence>
<feature type="chain" id="PRO_1000137461" description="Phosphatidylglycerol--prolipoprotein diacylglyceryl transferase">
    <location>
        <begin position="1"/>
        <end position="325"/>
    </location>
</feature>
<feature type="transmembrane region" description="Helical" evidence="1">
    <location>
        <begin position="19"/>
        <end position="39"/>
    </location>
</feature>
<feature type="transmembrane region" description="Helical" evidence="1">
    <location>
        <begin position="47"/>
        <end position="67"/>
    </location>
</feature>
<feature type="transmembrane region" description="Helical" evidence="1">
    <location>
        <begin position="93"/>
        <end position="113"/>
    </location>
</feature>
<feature type="transmembrane region" description="Helical" evidence="1">
    <location>
        <begin position="119"/>
        <end position="139"/>
    </location>
</feature>
<feature type="transmembrane region" description="Helical" evidence="1">
    <location>
        <begin position="175"/>
        <end position="195"/>
    </location>
</feature>
<feature type="transmembrane region" description="Helical" evidence="1">
    <location>
        <begin position="207"/>
        <end position="225"/>
    </location>
</feature>
<feature type="transmembrane region" description="Helical" evidence="1">
    <location>
        <begin position="237"/>
        <end position="257"/>
    </location>
</feature>
<feature type="region of interest" description="Disordered" evidence="2">
    <location>
        <begin position="266"/>
        <end position="325"/>
    </location>
</feature>
<feature type="compositionally biased region" description="Basic and acidic residues" evidence="2">
    <location>
        <begin position="266"/>
        <end position="312"/>
    </location>
</feature>
<feature type="compositionally biased region" description="Low complexity" evidence="2">
    <location>
        <begin position="313"/>
        <end position="325"/>
    </location>
</feature>
<feature type="binding site" evidence="1">
    <location>
        <position position="141"/>
    </location>
    <ligand>
        <name>a 1,2-diacyl-sn-glycero-3-phospho-(1'-sn-glycerol)</name>
        <dbReference type="ChEBI" id="CHEBI:64716"/>
    </ligand>
</feature>
<comment type="function">
    <text evidence="1">Catalyzes the transfer of the diacylglyceryl group from phosphatidylglycerol to the sulfhydryl group of the N-terminal cysteine of a prolipoprotein, the first step in the formation of mature lipoproteins.</text>
</comment>
<comment type="catalytic activity">
    <reaction evidence="1">
        <text>L-cysteinyl-[prolipoprotein] + a 1,2-diacyl-sn-glycero-3-phospho-(1'-sn-glycerol) = an S-1,2-diacyl-sn-glyceryl-L-cysteinyl-[prolipoprotein] + sn-glycerol 1-phosphate + H(+)</text>
        <dbReference type="Rhea" id="RHEA:56712"/>
        <dbReference type="Rhea" id="RHEA-COMP:14679"/>
        <dbReference type="Rhea" id="RHEA-COMP:14680"/>
        <dbReference type="ChEBI" id="CHEBI:15378"/>
        <dbReference type="ChEBI" id="CHEBI:29950"/>
        <dbReference type="ChEBI" id="CHEBI:57685"/>
        <dbReference type="ChEBI" id="CHEBI:64716"/>
        <dbReference type="ChEBI" id="CHEBI:140658"/>
        <dbReference type="EC" id="2.5.1.145"/>
    </reaction>
</comment>
<comment type="pathway">
    <text evidence="1">Protein modification; lipoprotein biosynthesis (diacylglyceryl transfer).</text>
</comment>
<comment type="subcellular location">
    <subcellularLocation>
        <location evidence="1">Cell membrane</location>
        <topology evidence="1">Multi-pass membrane protein</topology>
    </subcellularLocation>
</comment>
<comment type="similarity">
    <text evidence="1">Belongs to the Lgt family.</text>
</comment>
<name>LGT_STRGG</name>
<keyword id="KW-1003">Cell membrane</keyword>
<keyword id="KW-0472">Membrane</keyword>
<keyword id="KW-0808">Transferase</keyword>
<keyword id="KW-0812">Transmembrane</keyword>
<keyword id="KW-1133">Transmembrane helix</keyword>
<gene>
    <name evidence="1" type="primary">lgt</name>
    <name type="ordered locus">SGR_5474</name>
</gene>
<accession>B1W0P3</accession>
<organism>
    <name type="scientific">Streptomyces griseus subsp. griseus (strain JCM 4626 / CBS 651.72 / NBRC 13350 / KCC S-0626 / ISP 5235)</name>
    <dbReference type="NCBI Taxonomy" id="455632"/>
    <lineage>
        <taxon>Bacteria</taxon>
        <taxon>Bacillati</taxon>
        <taxon>Actinomycetota</taxon>
        <taxon>Actinomycetes</taxon>
        <taxon>Kitasatosporales</taxon>
        <taxon>Streptomycetaceae</taxon>
        <taxon>Streptomyces</taxon>
    </lineage>
</organism>
<proteinExistence type="inferred from homology"/>